<evidence type="ECO:0000255" key="1">
    <source>
        <dbReference type="HAMAP-Rule" id="MF_01317"/>
    </source>
</evidence>
<organism>
    <name type="scientific">Asparagus officinalis</name>
    <name type="common">Garden asparagus</name>
    <dbReference type="NCBI Taxonomy" id="4686"/>
    <lineage>
        <taxon>Eukaryota</taxon>
        <taxon>Viridiplantae</taxon>
        <taxon>Streptophyta</taxon>
        <taxon>Embryophyta</taxon>
        <taxon>Tracheophyta</taxon>
        <taxon>Spermatophyta</taxon>
        <taxon>Magnoliopsida</taxon>
        <taxon>Liliopsida</taxon>
        <taxon>Asparagales</taxon>
        <taxon>Asparagaceae</taxon>
        <taxon>Asparagoideae</taxon>
        <taxon>Asparagus</taxon>
    </lineage>
</organism>
<comment type="function">
    <text evidence="1">One of the components of the core complex of photosystem II (PSII). PSII is a light-driven water:plastoquinone oxidoreductase that uses light energy to abstract electrons from H(2)O, generating O(2) and a proton gradient subsequently used for ATP formation. It consists of a core antenna complex that captures photons, and an electron transfer chain that converts photonic excitation into a charge separation. This subunit is found at the monomer-monomer interface and is required for correct PSII assembly and/or dimerization.</text>
</comment>
<comment type="subunit">
    <text evidence="1">PSII is composed of 1 copy each of membrane proteins PsbA, PsbB, PsbC, PsbD, PsbE, PsbF, PsbH, PsbI, PsbJ, PsbK, PsbL, PsbM, PsbT, PsbX, PsbY, PsbZ, Psb30/Ycf12, at least 3 peripheral proteins of the oxygen-evolving complex and a large number of cofactors. It forms dimeric complexes.</text>
</comment>
<comment type="subcellular location">
    <subcellularLocation>
        <location evidence="1">Plastid</location>
        <location evidence="1">Chloroplast thylakoid membrane</location>
        <topology evidence="1">Single-pass membrane protein</topology>
    </subcellularLocation>
</comment>
<comment type="similarity">
    <text evidence="1">Belongs to the PsbL family.</text>
</comment>
<proteinExistence type="inferred from homology"/>
<keyword id="KW-0150">Chloroplast</keyword>
<keyword id="KW-0472">Membrane</keyword>
<keyword id="KW-0602">Photosynthesis</keyword>
<keyword id="KW-0604">Photosystem II</keyword>
<keyword id="KW-0934">Plastid</keyword>
<keyword id="KW-0674">Reaction center</keyword>
<keyword id="KW-0793">Thylakoid</keyword>
<keyword id="KW-0812">Transmembrane</keyword>
<keyword id="KW-1133">Transmembrane helix</keyword>
<protein>
    <recommendedName>
        <fullName evidence="1">Photosystem II reaction center protein L</fullName>
        <shortName evidence="1">PSII-L</shortName>
    </recommendedName>
</protein>
<gene>
    <name evidence="1" type="primary">psbL</name>
</gene>
<name>PSBL_ASPOF</name>
<feature type="chain" id="PRO_0000219682" description="Photosystem II reaction center protein L">
    <location>
        <begin position="1"/>
        <end position="38"/>
    </location>
</feature>
<feature type="transmembrane region" description="Helical" evidence="1">
    <location>
        <begin position="17"/>
        <end position="37"/>
    </location>
</feature>
<geneLocation type="chloroplast"/>
<sequence length="38" mass="4497">MTQSNPNEQNVELNRTSLYWGLLLIFVLAVLFSNYFFN</sequence>
<dbReference type="EMBL" id="AY147585">
    <property type="protein sequence ID" value="AAN32442.1"/>
    <property type="molecule type" value="Genomic_DNA"/>
</dbReference>
<dbReference type="RefSeq" id="YP_009370036.1">
    <property type="nucleotide sequence ID" value="NC_034777.1"/>
</dbReference>
<dbReference type="SMR" id="Q67HB2"/>
<dbReference type="GeneID" id="33018191"/>
<dbReference type="GO" id="GO:0009535">
    <property type="term" value="C:chloroplast thylakoid membrane"/>
    <property type="evidence" value="ECO:0007669"/>
    <property type="project" value="UniProtKB-SubCell"/>
</dbReference>
<dbReference type="GO" id="GO:0009539">
    <property type="term" value="C:photosystem II reaction center"/>
    <property type="evidence" value="ECO:0007669"/>
    <property type="project" value="InterPro"/>
</dbReference>
<dbReference type="GO" id="GO:0015979">
    <property type="term" value="P:photosynthesis"/>
    <property type="evidence" value="ECO:0007669"/>
    <property type="project" value="UniProtKB-UniRule"/>
</dbReference>
<dbReference type="HAMAP" id="MF_01317">
    <property type="entry name" value="PSII_PsbL"/>
    <property type="match status" value="1"/>
</dbReference>
<dbReference type="InterPro" id="IPR003372">
    <property type="entry name" value="PSII_PsbL"/>
</dbReference>
<dbReference type="InterPro" id="IPR037266">
    <property type="entry name" value="PSII_PsbL_sf"/>
</dbReference>
<dbReference type="NCBIfam" id="NF001972">
    <property type="entry name" value="PRK00753.1"/>
    <property type="match status" value="1"/>
</dbReference>
<dbReference type="Pfam" id="PF02419">
    <property type="entry name" value="PsbL"/>
    <property type="match status" value="1"/>
</dbReference>
<dbReference type="SUPFAM" id="SSF161017">
    <property type="entry name" value="Photosystem II reaction center protein L, PsbL"/>
    <property type="match status" value="1"/>
</dbReference>
<reference key="1">
    <citation type="submission" date="2002-09" db="EMBL/GenBank/DDBJ databases">
        <title>Phylogenetic relationships among the major lineages of Asparagales based on a large chloroplast data set.</title>
        <authorList>
            <person name="McPherson M.A."/>
            <person name="Rai H.S."/>
            <person name="Wong W.A."/>
            <person name="Graham S.W."/>
        </authorList>
    </citation>
    <scope>NUCLEOTIDE SEQUENCE [GENOMIC DNA]</scope>
</reference>
<accession>Q67HB2</accession>